<accession>Q08DZ2</accession>
<gene>
    <name type="primary">PRP4K</name>
    <name type="synonym">PRPF4B</name>
</gene>
<dbReference type="EC" id="2.7.11.1"/>
<dbReference type="EMBL" id="BC123499">
    <property type="protein sequence ID" value="AAI23500.1"/>
    <property type="molecule type" value="mRNA"/>
</dbReference>
<dbReference type="RefSeq" id="NP_001069025.1">
    <property type="nucleotide sequence ID" value="NM_001075557.1"/>
</dbReference>
<dbReference type="SMR" id="Q08DZ2"/>
<dbReference type="FunCoup" id="Q08DZ2">
    <property type="interactions" value="5549"/>
</dbReference>
<dbReference type="STRING" id="9913.ENSBTAP00000061933"/>
<dbReference type="PaxDb" id="9913-ENSBTAP00000002695"/>
<dbReference type="KEGG" id="bta:512236"/>
<dbReference type="CTD" id="19134"/>
<dbReference type="VEuPathDB" id="HostDB:ENSBTAG00000002086"/>
<dbReference type="eggNOG" id="KOG0670">
    <property type="taxonomic scope" value="Eukaryota"/>
</dbReference>
<dbReference type="HOGENOM" id="CLU_000288_5_3_1"/>
<dbReference type="InParanoid" id="Q08DZ2"/>
<dbReference type="OrthoDB" id="3967at2759"/>
<dbReference type="TreeFam" id="TF315246"/>
<dbReference type="Proteomes" id="UP000009136">
    <property type="component" value="Chromosome 23"/>
</dbReference>
<dbReference type="Bgee" id="ENSBTAG00000002086">
    <property type="expression patterns" value="Expressed in thymus and 111 other cell types or tissues"/>
</dbReference>
<dbReference type="GO" id="GO:0000776">
    <property type="term" value="C:kinetochore"/>
    <property type="evidence" value="ECO:0000250"/>
    <property type="project" value="UniProtKB"/>
</dbReference>
<dbReference type="GO" id="GO:0016607">
    <property type="term" value="C:nuclear speck"/>
    <property type="evidence" value="ECO:0000250"/>
    <property type="project" value="UniProtKB"/>
</dbReference>
<dbReference type="GO" id="GO:0005681">
    <property type="term" value="C:spliceosomal complex"/>
    <property type="evidence" value="ECO:0007669"/>
    <property type="project" value="UniProtKB-KW"/>
</dbReference>
<dbReference type="GO" id="GO:0005524">
    <property type="term" value="F:ATP binding"/>
    <property type="evidence" value="ECO:0007669"/>
    <property type="project" value="UniProtKB-KW"/>
</dbReference>
<dbReference type="GO" id="GO:0106310">
    <property type="term" value="F:protein serine kinase activity"/>
    <property type="evidence" value="ECO:0007669"/>
    <property type="project" value="RHEA"/>
</dbReference>
<dbReference type="GO" id="GO:0004674">
    <property type="term" value="F:protein serine/threonine kinase activity"/>
    <property type="evidence" value="ECO:0000250"/>
    <property type="project" value="UniProtKB"/>
</dbReference>
<dbReference type="GO" id="GO:0045292">
    <property type="term" value="P:mRNA cis splicing, via spliceosome"/>
    <property type="evidence" value="ECO:0007669"/>
    <property type="project" value="InterPro"/>
</dbReference>
<dbReference type="GO" id="GO:0090266">
    <property type="term" value="P:regulation of mitotic cell cycle spindle assembly checkpoint"/>
    <property type="evidence" value="ECO:0000250"/>
    <property type="project" value="UniProtKB"/>
</dbReference>
<dbReference type="GO" id="GO:0000387">
    <property type="term" value="P:spliceosomal snRNP assembly"/>
    <property type="evidence" value="ECO:0000250"/>
    <property type="project" value="UniProtKB"/>
</dbReference>
<dbReference type="GO" id="GO:0000244">
    <property type="term" value="P:spliceosomal tri-snRNP complex assembly"/>
    <property type="evidence" value="ECO:0000250"/>
    <property type="project" value="UniProtKB"/>
</dbReference>
<dbReference type="CDD" id="cd14135">
    <property type="entry name" value="STKc_PRP4"/>
    <property type="match status" value="1"/>
</dbReference>
<dbReference type="FunFam" id="1.10.510.10:FF:000078">
    <property type="entry name" value="Serine/threonine-protein kinase PRP4 homolog"/>
    <property type="match status" value="1"/>
</dbReference>
<dbReference type="FunFam" id="3.30.200.20:FF:000123">
    <property type="entry name" value="serine/threonine-protein kinase PRP4 homolog"/>
    <property type="match status" value="1"/>
</dbReference>
<dbReference type="Gene3D" id="3.30.200.20">
    <property type="entry name" value="Phosphorylase Kinase, domain 1"/>
    <property type="match status" value="1"/>
</dbReference>
<dbReference type="Gene3D" id="1.10.510.10">
    <property type="entry name" value="Transferase(Phosphotransferase) domain 1"/>
    <property type="match status" value="1"/>
</dbReference>
<dbReference type="InterPro" id="IPR011009">
    <property type="entry name" value="Kinase-like_dom_sf"/>
</dbReference>
<dbReference type="InterPro" id="IPR000719">
    <property type="entry name" value="Prot_kinase_dom"/>
</dbReference>
<dbReference type="InterPro" id="IPR008271">
    <property type="entry name" value="Ser/Thr_kinase_AS"/>
</dbReference>
<dbReference type="InterPro" id="IPR050494">
    <property type="entry name" value="Ser_Thr_dual-spec_kinase"/>
</dbReference>
<dbReference type="InterPro" id="IPR044092">
    <property type="entry name" value="STKc_PRP4"/>
</dbReference>
<dbReference type="PANTHER" id="PTHR24058">
    <property type="entry name" value="DUAL SPECIFICITY PROTEIN KINASE"/>
    <property type="match status" value="1"/>
</dbReference>
<dbReference type="PANTHER" id="PTHR24058:SF103">
    <property type="entry name" value="SERINE_THREONINE-PROTEIN KINASE PRP4 HOMOLOG"/>
    <property type="match status" value="1"/>
</dbReference>
<dbReference type="Pfam" id="PF00069">
    <property type="entry name" value="Pkinase"/>
    <property type="match status" value="1"/>
</dbReference>
<dbReference type="SMART" id="SM00220">
    <property type="entry name" value="S_TKc"/>
    <property type="match status" value="1"/>
</dbReference>
<dbReference type="SUPFAM" id="SSF56112">
    <property type="entry name" value="Protein kinase-like (PK-like)"/>
    <property type="match status" value="1"/>
</dbReference>
<dbReference type="PROSITE" id="PS50011">
    <property type="entry name" value="PROTEIN_KINASE_DOM"/>
    <property type="match status" value="1"/>
</dbReference>
<dbReference type="PROSITE" id="PS00108">
    <property type="entry name" value="PROTEIN_KINASE_ST"/>
    <property type="match status" value="1"/>
</dbReference>
<sequence length="1008" mass="116646">MAAAEAPSLREQPEMEDANSEKSVNEENGEVSEDQSQNKHSRHKKKKHKHRSKHKKHKHSSEEDKDRKHKHKHKHKKHKRKEVADASDKEGMSPAKRTKLDDLALLEDLEKQRALIKAELDNELMEGKVQSGMGLILQGYESGSEEEGEIHEKARNGNRSSTRSSSTKGKLELVDNKNSTKKRSKSRSKERTRHRSDKKKSKGGVEIVKEKATRSKSKERKKSKSPSKRSKSQDEARKSKSPTLRRRSQEKVGKARSPVDDKAKVEDKSKAKDRKKSPVINESRSRDRGKKSRSPVDLRGKSKDRRSRSKERKSKRPEADKEKKPVKSPSKDASSGKENRSPSRRPGRSPKRRSLSPKQRDKSRRSRSPLVNDRRSKQSKSPSRTLSPGRRAKSRSLERKRREPERRRLSSPRTRPRDDILSRRERSKDASPISRWSPARRRASRSPVRRRSRSPLRRSRSPRRRSRSPRRRDRGRRSRSRLRRRSRSRGGRRRRSRSKVKEDKFKGSLSEGMKVEQESSSDDNLEDFDVEEEDEEALIEQRRIQRQAIVQKYKYLADDSNLSVPSEPSSPQSSTRSRSPSPDDILERVAADVKEYERENVDTFEASVKAKHNLMAVEQNNGSSQKKLLAPDMFTESDDMFAAYFDSARLRAAGIGKDFKENPNLRDNWTDAEGYYRVNIGEVLDKRYNVYGYTGQGVFSNVVRARDNARANQEVAVKIIRNNELMQKTGLKELEFLKKLNDADPDDKFHCLRLFRHFYHKQHLCLVFEPLSMNLREVLKKYGKDVGLHIKAVRSYSQQLFLALKLLKRCNILHADIKPDNILVNESKTILKLCDFGSASHVADNDITPYLVSRFYRAPEIIIGKSYDYGIDMWSVGCTLYELYTGKILFPGKTNNHMLKLAMDLKGKMPNKMIRKGVFKDQHFDQNLNFMYIEVDKVTEREKVTVMSTINPTKDLLADLIGCQRLPEDQRKKVHQLKDLLDQILMLDPAKRISINQALQHAFIQEKI</sequence>
<name>PRP4K_BOVIN</name>
<reference key="1">
    <citation type="submission" date="2006-09" db="EMBL/GenBank/DDBJ databases">
        <authorList>
            <consortium name="NIH - Mammalian Gene Collection (MGC) project"/>
        </authorList>
    </citation>
    <scope>NUCLEOTIDE SEQUENCE [LARGE SCALE MRNA]</scope>
    <source>
        <strain>Hereford</strain>
        <tissue>Thalamus</tissue>
    </source>
</reference>
<protein>
    <recommendedName>
        <fullName>Serine/threonine-protein kinase PRP4 homolog</fullName>
        <ecNumber>2.7.11.1</ecNumber>
    </recommendedName>
    <alternativeName>
        <fullName>PRP4 pre-mRNA-processing factor 4 homolog</fullName>
    </alternativeName>
</protein>
<keyword id="KW-0007">Acetylation</keyword>
<keyword id="KW-0067">ATP-binding</keyword>
<keyword id="KW-0137">Centromere</keyword>
<keyword id="KW-0158">Chromosome</keyword>
<keyword id="KW-1017">Isopeptide bond</keyword>
<keyword id="KW-0418">Kinase</keyword>
<keyword id="KW-0995">Kinetochore</keyword>
<keyword id="KW-0507">mRNA processing</keyword>
<keyword id="KW-0508">mRNA splicing</keyword>
<keyword id="KW-0547">Nucleotide-binding</keyword>
<keyword id="KW-0539">Nucleus</keyword>
<keyword id="KW-0597">Phosphoprotein</keyword>
<keyword id="KW-1185">Reference proteome</keyword>
<keyword id="KW-0723">Serine/threonine-protein kinase</keyword>
<keyword id="KW-0747">Spliceosome</keyword>
<keyword id="KW-0808">Transferase</keyword>
<keyword id="KW-0832">Ubl conjugation</keyword>
<comment type="function">
    <text evidence="1">Serine/threonine kinase involved in spliceosomal assembly as well as mitosis and signaling regulation. Connects chromatin mediated regulation of transcription and pre-mRNA splicing. During spliceosomal assembly, interacts with and phosphorylates PRPF6 and PRPF31, components of the U4/U6-U5 tri-small nuclear ribonucleoprotein (snRNP), to facilitate the formation of the spliceosome B complex. Plays a role in regulating transcription and the spindle assembly checkpoint (SAC). Associates with U5 snRNP and NCOR1 deacetylase complexes which may allow a coordination of pre-mRNA splicing with chromatin remodeling events involved in transcriptional regulation. Associates and probably phosphorylates SMARCA4 and NCOR1. Phosphorylates SRSF1. Associates with kinetochores during mitosis and is necessary for recruitment and maintenance of the checkpoint proteins such as MAD1L1 and MAD12L1 at the kinetochores. Phosphorylates and regulates the activity of the transcription factors such as ELK1 and KLF13. Phosphorylates nuclear YAP1 and WWTR1/TAZ which induces nuclear exclusion and regulates Hippo signaling pathway, involved in tissue growth control.</text>
</comment>
<comment type="catalytic activity">
    <reaction evidence="1">
        <text>L-seryl-[protein] + ATP = O-phospho-L-seryl-[protein] + ADP + H(+)</text>
        <dbReference type="Rhea" id="RHEA:17989"/>
        <dbReference type="Rhea" id="RHEA-COMP:9863"/>
        <dbReference type="Rhea" id="RHEA-COMP:11604"/>
        <dbReference type="ChEBI" id="CHEBI:15378"/>
        <dbReference type="ChEBI" id="CHEBI:29999"/>
        <dbReference type="ChEBI" id="CHEBI:30616"/>
        <dbReference type="ChEBI" id="CHEBI:83421"/>
        <dbReference type="ChEBI" id="CHEBI:456216"/>
        <dbReference type="EC" id="2.7.11.1"/>
    </reaction>
    <physiologicalReaction direction="left-to-right" evidence="1">
        <dbReference type="Rhea" id="RHEA:17990"/>
    </physiologicalReaction>
</comment>
<comment type="catalytic activity">
    <reaction evidence="1">
        <text>L-threonyl-[protein] + ATP = O-phospho-L-threonyl-[protein] + ADP + H(+)</text>
        <dbReference type="Rhea" id="RHEA:46608"/>
        <dbReference type="Rhea" id="RHEA-COMP:11060"/>
        <dbReference type="Rhea" id="RHEA-COMP:11605"/>
        <dbReference type="ChEBI" id="CHEBI:15378"/>
        <dbReference type="ChEBI" id="CHEBI:30013"/>
        <dbReference type="ChEBI" id="CHEBI:30616"/>
        <dbReference type="ChEBI" id="CHEBI:61977"/>
        <dbReference type="ChEBI" id="CHEBI:456216"/>
        <dbReference type="EC" id="2.7.11.1"/>
    </reaction>
    <physiologicalReaction direction="left-to-right" evidence="1">
        <dbReference type="Rhea" id="RHEA:46609"/>
    </physiologicalReaction>
</comment>
<comment type="subunit">
    <text evidence="1">Interacts with CLK1 C-terminus. Associates with the U5 snRNP and NCOR1 deacetylase complexes. Identified in the spliceosome C complex.</text>
</comment>
<comment type="subcellular location">
    <subcellularLocation>
        <location evidence="1">Nucleus</location>
    </subcellularLocation>
    <subcellularLocation>
        <location evidence="1">Chromosome</location>
        <location evidence="1">Centromere</location>
        <location evidence="1">Kinetochore</location>
    </subcellularLocation>
    <text evidence="1">Located throughout the nucleus, excluding the nucleolus but enriched in multiple speckles.</text>
</comment>
<comment type="PTM">
    <text evidence="1">Phosphorylated by CLK1. Autophosphorylated; phosphorylation inhibits interaction with its targets, such as PRPF6 or SMARCA4.</text>
</comment>
<comment type="similarity">
    <text evidence="7">Belongs to the protein kinase superfamily. CMGC Ser/Thr protein kinase family.</text>
</comment>
<organism>
    <name type="scientific">Bos taurus</name>
    <name type="common">Bovine</name>
    <dbReference type="NCBI Taxonomy" id="9913"/>
    <lineage>
        <taxon>Eukaryota</taxon>
        <taxon>Metazoa</taxon>
        <taxon>Chordata</taxon>
        <taxon>Craniata</taxon>
        <taxon>Vertebrata</taxon>
        <taxon>Euteleostomi</taxon>
        <taxon>Mammalia</taxon>
        <taxon>Eutheria</taxon>
        <taxon>Laurasiatheria</taxon>
        <taxon>Artiodactyla</taxon>
        <taxon>Ruminantia</taxon>
        <taxon>Pecora</taxon>
        <taxon>Bovidae</taxon>
        <taxon>Bovinae</taxon>
        <taxon>Bos</taxon>
    </lineage>
</organism>
<feature type="initiator methionine" description="Removed" evidence="1">
    <location>
        <position position="1"/>
    </location>
</feature>
<feature type="chain" id="PRO_0000326138" description="Serine/threonine-protein kinase PRP4 homolog">
    <location>
        <begin position="2"/>
        <end position="1008"/>
    </location>
</feature>
<feature type="domain" description="Protein kinase" evidence="4">
    <location>
        <begin position="688"/>
        <end position="1004"/>
    </location>
</feature>
<feature type="region of interest" description="Disordered" evidence="6">
    <location>
        <begin position="1"/>
        <end position="103"/>
    </location>
</feature>
<feature type="region of interest" description="Disordered" evidence="6">
    <location>
        <begin position="140"/>
        <end position="536"/>
    </location>
</feature>
<feature type="region of interest" description="Disordered" evidence="6">
    <location>
        <begin position="560"/>
        <end position="584"/>
    </location>
</feature>
<feature type="compositionally biased region" description="Basic residues" evidence="6">
    <location>
        <begin position="39"/>
        <end position="59"/>
    </location>
</feature>
<feature type="compositionally biased region" description="Basic residues" evidence="6">
    <location>
        <begin position="67"/>
        <end position="81"/>
    </location>
</feature>
<feature type="compositionally biased region" description="Basic and acidic residues" evidence="6">
    <location>
        <begin position="82"/>
        <end position="91"/>
    </location>
</feature>
<feature type="compositionally biased region" description="Low complexity" evidence="6">
    <location>
        <begin position="157"/>
        <end position="168"/>
    </location>
</feature>
<feature type="compositionally biased region" description="Basic residues" evidence="6">
    <location>
        <begin position="179"/>
        <end position="202"/>
    </location>
</feature>
<feature type="compositionally biased region" description="Basic residues" evidence="6">
    <location>
        <begin position="214"/>
        <end position="230"/>
    </location>
</feature>
<feature type="compositionally biased region" description="Basic and acidic residues" evidence="6">
    <location>
        <begin position="247"/>
        <end position="270"/>
    </location>
</feature>
<feature type="compositionally biased region" description="Basic residues" evidence="6">
    <location>
        <begin position="302"/>
        <end position="315"/>
    </location>
</feature>
<feature type="compositionally biased region" description="Basic and acidic residues" evidence="6">
    <location>
        <begin position="316"/>
        <end position="325"/>
    </location>
</feature>
<feature type="compositionally biased region" description="Basic residues" evidence="6">
    <location>
        <begin position="342"/>
        <end position="367"/>
    </location>
</feature>
<feature type="compositionally biased region" description="Basic and acidic residues" evidence="6">
    <location>
        <begin position="395"/>
        <end position="408"/>
    </location>
</feature>
<feature type="compositionally biased region" description="Basic and acidic residues" evidence="6">
    <location>
        <begin position="415"/>
        <end position="429"/>
    </location>
</feature>
<feature type="compositionally biased region" description="Basic residues" evidence="6">
    <location>
        <begin position="438"/>
        <end position="498"/>
    </location>
</feature>
<feature type="compositionally biased region" description="Acidic residues" evidence="6">
    <location>
        <begin position="519"/>
        <end position="536"/>
    </location>
</feature>
<feature type="compositionally biased region" description="Low complexity" evidence="6">
    <location>
        <begin position="563"/>
        <end position="582"/>
    </location>
</feature>
<feature type="active site" description="Proton acceptor" evidence="4 5">
    <location>
        <position position="816"/>
    </location>
</feature>
<feature type="binding site" evidence="4">
    <location>
        <begin position="694"/>
        <end position="702"/>
    </location>
    <ligand>
        <name>ATP</name>
        <dbReference type="ChEBI" id="CHEBI:30616"/>
    </ligand>
</feature>
<feature type="binding site" evidence="4">
    <location>
        <position position="718"/>
    </location>
    <ligand>
        <name>ATP</name>
        <dbReference type="ChEBI" id="CHEBI:30616"/>
    </ligand>
</feature>
<feature type="modified residue" description="N-acetylalanine" evidence="1">
    <location>
        <position position="2"/>
    </location>
</feature>
<feature type="modified residue" description="Phosphoserine" evidence="2">
    <location>
        <position position="8"/>
    </location>
</feature>
<feature type="modified residue" description="Phosphoserine" evidence="1">
    <location>
        <position position="20"/>
    </location>
</feature>
<feature type="modified residue" description="Phosphoserine" evidence="1">
    <location>
        <position position="23"/>
    </location>
</feature>
<feature type="modified residue" description="Phosphoserine" evidence="1">
    <location>
        <position position="32"/>
    </location>
</feature>
<feature type="modified residue" description="Phosphoserine" evidence="1">
    <location>
        <position position="87"/>
    </location>
</feature>
<feature type="modified residue" description="Phosphoserine" evidence="1">
    <location>
        <position position="93"/>
    </location>
</feature>
<feature type="modified residue" description="N6-acetyllysine; alternate" evidence="3">
    <location>
        <position position="99"/>
    </location>
</feature>
<feature type="modified residue" description="Phosphoserine" evidence="1">
    <location>
        <position position="131"/>
    </location>
</feature>
<feature type="modified residue" description="Phosphotyrosine" evidence="1">
    <location>
        <position position="140"/>
    </location>
</feature>
<feature type="modified residue" description="Phosphoserine" evidence="1">
    <location>
        <position position="142"/>
    </location>
</feature>
<feature type="modified residue" description="Phosphoserine" evidence="1">
    <location>
        <position position="144"/>
    </location>
</feature>
<feature type="modified residue" description="Phosphoserine" evidence="1">
    <location>
        <position position="166"/>
    </location>
</feature>
<feature type="modified residue" description="Phosphoserine" evidence="1">
    <location>
        <position position="239"/>
    </location>
</feature>
<feature type="modified residue" description="Phosphoserine" evidence="1">
    <location>
        <position position="241"/>
    </location>
</feature>
<feature type="modified residue" description="Phosphoserine" evidence="1">
    <location>
        <position position="257"/>
    </location>
</feature>
<feature type="modified residue" description="Phosphoserine" evidence="1">
    <location>
        <position position="277"/>
    </location>
</feature>
<feature type="modified residue" description="Phosphoserine" evidence="1">
    <location>
        <position position="283"/>
    </location>
</feature>
<feature type="modified residue" description="Phosphoserine" evidence="1">
    <location>
        <position position="292"/>
    </location>
</feature>
<feature type="modified residue" description="Phosphoserine" evidence="1">
    <location>
        <position position="294"/>
    </location>
</feature>
<feature type="modified residue" description="Phosphoserine" evidence="1">
    <location>
        <position position="328"/>
    </location>
</feature>
<feature type="modified residue" description="Phosphoserine" evidence="1">
    <location>
        <position position="354"/>
    </location>
</feature>
<feature type="modified residue" description="Phosphoserine" evidence="1">
    <location>
        <position position="356"/>
    </location>
</feature>
<feature type="modified residue" description="Phosphoserine" evidence="1">
    <location>
        <position position="366"/>
    </location>
</feature>
<feature type="modified residue" description="Phosphoserine" evidence="1">
    <location>
        <position position="368"/>
    </location>
</feature>
<feature type="modified residue" description="Phosphothreonine" evidence="1">
    <location>
        <position position="385"/>
    </location>
</feature>
<feature type="modified residue" description="Phosphoserine" evidence="1">
    <location>
        <position position="387"/>
    </location>
</feature>
<feature type="modified residue" description="Phosphoserine" evidence="1">
    <location>
        <position position="427"/>
    </location>
</feature>
<feature type="modified residue" description="Phosphoserine" evidence="1">
    <location>
        <position position="431"/>
    </location>
</feature>
<feature type="modified residue" description="Phosphoserine" evidence="1">
    <location>
        <position position="437"/>
    </location>
</feature>
<feature type="modified residue" description="Phosphoserine" evidence="1">
    <location>
        <position position="519"/>
    </location>
</feature>
<feature type="modified residue" description="Phosphoserine" evidence="1">
    <location>
        <position position="520"/>
    </location>
</feature>
<feature type="modified residue" description="Phosphoserine" evidence="1">
    <location>
        <position position="521"/>
    </location>
</feature>
<feature type="modified residue" description="Phosphoserine" evidence="1">
    <location>
        <position position="566"/>
    </location>
</feature>
<feature type="modified residue" description="Phosphoserine" evidence="1">
    <location>
        <position position="570"/>
    </location>
</feature>
<feature type="modified residue" description="Phosphoserine" evidence="3">
    <location>
        <position position="577"/>
    </location>
</feature>
<feature type="modified residue" description="Phosphoserine" evidence="1">
    <location>
        <position position="579"/>
    </location>
</feature>
<feature type="modified residue" description="Phosphoserine" evidence="1">
    <location>
        <position position="581"/>
    </location>
</feature>
<feature type="modified residue" description="N6-acetyllysine" evidence="1">
    <location>
        <position position="718"/>
    </location>
</feature>
<feature type="modified residue" description="Phosphotyrosine" evidence="1">
    <location>
        <position position="850"/>
    </location>
</feature>
<feature type="modified residue" description="Phosphoserine" evidence="2">
    <location>
        <position position="853"/>
    </location>
</feature>
<feature type="cross-link" description="Glycyl lysine isopeptide (Lys-Gly) (interchain with G-Cter in SUMO2); alternate" evidence="1">
    <location>
        <position position="99"/>
    </location>
</feature>
<feature type="cross-link" description="Glycyl lysine isopeptide (Lys-Gly) (interchain with G-Cter in SUMO2)" evidence="1">
    <location>
        <position position="111"/>
    </location>
</feature>
<feature type="cross-link" description="Glycyl lysine isopeptide (Lys-Gly) (interchain with G-Cter in SUMO1); alternate" evidence="1">
    <location>
        <position position="117"/>
    </location>
</feature>
<feature type="cross-link" description="Glycyl lysine isopeptide (Lys-Gly) (interchain with G-Cter in SUMO2); alternate" evidence="1">
    <location>
        <position position="117"/>
    </location>
</feature>
<feature type="cross-link" description="Glycyl lysine isopeptide (Lys-Gly) (interchain with G-Cter in SUMO2)" evidence="1">
    <location>
        <position position="170"/>
    </location>
</feature>
<feature type="cross-link" description="Glycyl lysine isopeptide (Lys-Gly) (interchain with G-Cter in SUMO2)" evidence="1">
    <location>
        <position position="177"/>
    </location>
</feature>
<feature type="cross-link" description="Glycyl lysine isopeptide (Lys-Gly) (interchain with G-Cter in SUMO2)" evidence="1">
    <location>
        <position position="594"/>
    </location>
</feature>
<feature type="cross-link" description="Glycyl lysine isopeptide (Lys-Gly) (interchain with G-Cter in SUMO2)" evidence="1">
    <location>
        <position position="660"/>
    </location>
</feature>
<proteinExistence type="evidence at transcript level"/>
<evidence type="ECO:0000250" key="1">
    <source>
        <dbReference type="UniProtKB" id="Q13523"/>
    </source>
</evidence>
<evidence type="ECO:0000250" key="2">
    <source>
        <dbReference type="UniProtKB" id="Q5RKH1"/>
    </source>
</evidence>
<evidence type="ECO:0000250" key="3">
    <source>
        <dbReference type="UniProtKB" id="Q61136"/>
    </source>
</evidence>
<evidence type="ECO:0000255" key="4">
    <source>
        <dbReference type="PROSITE-ProRule" id="PRU00159"/>
    </source>
</evidence>
<evidence type="ECO:0000255" key="5">
    <source>
        <dbReference type="PROSITE-ProRule" id="PRU10027"/>
    </source>
</evidence>
<evidence type="ECO:0000256" key="6">
    <source>
        <dbReference type="SAM" id="MobiDB-lite"/>
    </source>
</evidence>
<evidence type="ECO:0000305" key="7"/>